<comment type="similarity">
    <text evidence="1">Belongs to the UPF0225 family.</text>
</comment>
<proteinExistence type="inferred from homology"/>
<keyword id="KW-1185">Reference proteome</keyword>
<dbReference type="EMBL" id="BA000035">
    <property type="protein sequence ID" value="BAC18380.1"/>
    <property type="molecule type" value="Genomic_DNA"/>
</dbReference>
<dbReference type="RefSeq" id="WP_006767569.1">
    <property type="nucleotide sequence ID" value="NC_004369.1"/>
</dbReference>
<dbReference type="SMR" id="P59191"/>
<dbReference type="STRING" id="196164.gene:10741989"/>
<dbReference type="KEGG" id="cef:CE1570"/>
<dbReference type="eggNOG" id="COG3012">
    <property type="taxonomic scope" value="Bacteria"/>
</dbReference>
<dbReference type="HOGENOM" id="CLU_099590_2_0_11"/>
<dbReference type="OrthoDB" id="21421at2"/>
<dbReference type="Proteomes" id="UP000001409">
    <property type="component" value="Chromosome"/>
</dbReference>
<dbReference type="Gene3D" id="3.10.450.50">
    <property type="match status" value="1"/>
</dbReference>
<dbReference type="HAMAP" id="MF_00612">
    <property type="entry name" value="UPF0225"/>
    <property type="match status" value="1"/>
</dbReference>
<dbReference type="InterPro" id="IPR032710">
    <property type="entry name" value="NTF2-like_dom_sf"/>
</dbReference>
<dbReference type="InterPro" id="IPR004027">
    <property type="entry name" value="SEC_C_motif"/>
</dbReference>
<dbReference type="InterPro" id="IPR023006">
    <property type="entry name" value="UPF0225"/>
</dbReference>
<dbReference type="InterPro" id="IPR048469">
    <property type="entry name" value="YchJ-like_M"/>
</dbReference>
<dbReference type="PANTHER" id="PTHR33747:SF1">
    <property type="entry name" value="ADENYLATE CYCLASE-ASSOCIATED CAP C-TERMINAL DOMAIN-CONTAINING PROTEIN"/>
    <property type="match status" value="1"/>
</dbReference>
<dbReference type="PANTHER" id="PTHR33747">
    <property type="entry name" value="UPF0225 PROTEIN SCO1677"/>
    <property type="match status" value="1"/>
</dbReference>
<dbReference type="Pfam" id="PF02810">
    <property type="entry name" value="SEC-C"/>
    <property type="match status" value="1"/>
</dbReference>
<dbReference type="Pfam" id="PF17775">
    <property type="entry name" value="YchJ_M-like"/>
    <property type="match status" value="1"/>
</dbReference>
<dbReference type="SUPFAM" id="SSF54427">
    <property type="entry name" value="NTF2-like"/>
    <property type="match status" value="1"/>
</dbReference>
<protein>
    <recommendedName>
        <fullName>UPF0225 protein CE1570</fullName>
    </recommendedName>
</protein>
<accession>P59191</accession>
<name>Y1570_COREF</name>
<organism>
    <name type="scientific">Corynebacterium efficiens (strain DSM 44549 / YS-314 / AJ 12310 / JCM 11189 / NBRC 100395)</name>
    <dbReference type="NCBI Taxonomy" id="196164"/>
    <lineage>
        <taxon>Bacteria</taxon>
        <taxon>Bacillati</taxon>
        <taxon>Actinomycetota</taxon>
        <taxon>Actinomycetes</taxon>
        <taxon>Mycobacteriales</taxon>
        <taxon>Corynebacteriaceae</taxon>
        <taxon>Corynebacterium</taxon>
    </lineage>
</organism>
<evidence type="ECO:0000305" key="1"/>
<reference key="1">
    <citation type="journal article" date="2003" name="Genome Res.">
        <title>Comparative complete genome sequence analysis of the amino acid replacements responsible for the thermostability of Corynebacterium efficiens.</title>
        <authorList>
            <person name="Nishio Y."/>
            <person name="Nakamura Y."/>
            <person name="Kawarabayasi Y."/>
            <person name="Usuda Y."/>
            <person name="Kimura E."/>
            <person name="Sugimoto S."/>
            <person name="Matsui K."/>
            <person name="Yamagishi A."/>
            <person name="Kikuchi H."/>
            <person name="Ikeo K."/>
            <person name="Gojobori T."/>
        </authorList>
    </citation>
    <scope>NUCLEOTIDE SEQUENCE [LARGE SCALE GENOMIC DNA]</scope>
    <source>
        <strain>DSM 44549 / YS-314 / AJ 12310 / JCM 11189 / NBRC 100395</strain>
    </source>
</reference>
<gene>
    <name type="ordered locus">CE1570</name>
</gene>
<feature type="chain" id="PRO_0000071800" description="UPF0225 protein CE1570">
    <location>
        <begin position="1"/>
        <end position="130"/>
    </location>
</feature>
<sequence>MPYDYDLRCPCGTGLTYGQCCHRYHAGNHHAPTAEALMRSRFTAFAAGETDYLLDTWDPATRPAELTLDDRLEFYRLEILETEGGGPFDATGRVKFQAFHRGLADGVQEEDSTFRKMDGRWVYSLGDVAE</sequence>